<organism>
    <name type="scientific">Mycosarcoma maydis</name>
    <name type="common">Corn smut fungus</name>
    <name type="synonym">Ustilago maydis</name>
    <dbReference type="NCBI Taxonomy" id="5270"/>
    <lineage>
        <taxon>Eukaryota</taxon>
        <taxon>Fungi</taxon>
        <taxon>Dikarya</taxon>
        <taxon>Basidiomycota</taxon>
        <taxon>Ustilaginomycotina</taxon>
        <taxon>Ustilaginomycetes</taxon>
        <taxon>Ustilaginales</taxon>
        <taxon>Ustilaginaceae</taxon>
        <taxon>Mycosarcoma</taxon>
    </lineage>
</organism>
<comment type="function">
    <text evidence="5 7 15">Polymerizes chitin, a structural polymer of the cell wall and septum, by transferring the sugar moiety of UDP-GlcNAc to the non-reducing end of the growing chitin polymer (Probable). Involved in mating tube and dikaryotic hyphae formation and required for the formation of invading hyphae during plant infection (PubMed:16314447, PubMed:20663961).</text>
</comment>
<comment type="catalytic activity">
    <reaction evidence="15">
        <text>[(1-&gt;4)-N-acetyl-beta-D-glucosaminyl](n) + UDP-N-acetyl-alpha-D-glucosamine = [(1-&gt;4)-N-acetyl-beta-D-glucosaminyl](n+1) + UDP + H(+)</text>
        <dbReference type="Rhea" id="RHEA:16637"/>
        <dbReference type="Rhea" id="RHEA-COMP:9593"/>
        <dbReference type="Rhea" id="RHEA-COMP:9595"/>
        <dbReference type="ChEBI" id="CHEBI:15378"/>
        <dbReference type="ChEBI" id="CHEBI:17029"/>
        <dbReference type="ChEBI" id="CHEBI:57705"/>
        <dbReference type="ChEBI" id="CHEBI:58223"/>
        <dbReference type="EC" id="2.4.1.16"/>
    </reaction>
    <physiologicalReaction direction="left-to-right" evidence="15">
        <dbReference type="Rhea" id="RHEA:16638"/>
    </physiologicalReaction>
</comment>
<comment type="subcellular location">
    <subcellularLocation>
        <location evidence="5 8 10 12">Cell membrane</location>
        <topology evidence="1">Multi-pass membrane protein</topology>
    </subcellularLocation>
    <subcellularLocation>
        <location evidence="6 8 10">Cytoplasmic vesicle membrane</location>
        <topology evidence="1">Multi-pass membrane protein</topology>
    </subcellularLocation>
    <subcellularLocation>
        <location evidence="8 10 12">Cell tip</location>
    </subcellularLocation>
    <text evidence="5 6 7 8 10">A constitutive cytoplasmic pool is present that localizes to intracellular microvesicles termed chitosomes. Chitosomes constitute a separate secretory route distinct from the typical secretory pathway and serve as a vehicle for delivering the enzyme to the sites on the cell surface where polysaccharide sythesis takes place. Localizes to septa of yeast-like cells and to the basal septum separating the living tip cell from the vacuolated part in hyphae. Also localizes to the growing bud tip in yeast-like cells and in a tip-ward gradient at the hyphal apex (PubMed:16314447, PubMed:17042749). Apical localization depends on F-actin and the motor domain, whereas motility requires microtubules (PubMed:20663961, PubMed:22027862, PubMed:27563844).</text>
</comment>
<comment type="induction">
    <text evidence="9">Expression is slightly lower in the yeast form than in the mycelium and shows a maximal expression in the log phase at about 14-18 h of incubation (PubMed:22538468). Shows a late increase in transcription at the stationary phase in both yeast and mycelial cells (PubMed:22538468). Highly expressed during the stage of white tumors of plant infection (PubMed:22538468).</text>
</comment>
<comment type="domain">
    <text evidence="7 8 10">The N-terminal myosin motor-like domain (MMD) supports exocytosis but not long-range delivery of transport vesicles.</text>
</comment>
<comment type="similarity">
    <text evidence="14">In the N-terminal section; belongs to the TRAFAC class myosin-kinesin ATPase superfamily. Myosin family.</text>
</comment>
<comment type="similarity">
    <text evidence="14">In the C-terminal section; belongs to the chitin synthase family. Class V subfamily.</text>
</comment>
<dbReference type="EC" id="2.4.1.16" evidence="15"/>
<dbReference type="EMBL" id="CM003147">
    <property type="protein sequence ID" value="KIS68630.1"/>
    <property type="molecule type" value="Genomic_DNA"/>
</dbReference>
<dbReference type="RefSeq" id="XP_011389642.1">
    <property type="nucleotide sequence ID" value="XM_011391340.1"/>
</dbReference>
<dbReference type="SMR" id="Q4P9K9"/>
<dbReference type="IntAct" id="Q4P9K9">
    <property type="interactions" value="1"/>
</dbReference>
<dbReference type="MINT" id="Q4P9K9"/>
<dbReference type="STRING" id="237631.Q4P9K9"/>
<dbReference type="GlyCosmos" id="Q4P9K9">
    <property type="glycosylation" value="9 sites, No reported glycans"/>
</dbReference>
<dbReference type="EnsemblFungi" id="KIS68630">
    <property type="protein sequence ID" value="KIS68630"/>
    <property type="gene ID" value="UMAG_03204"/>
</dbReference>
<dbReference type="GeneID" id="23563730"/>
<dbReference type="KEGG" id="uma:UMAG_03204"/>
<dbReference type="VEuPathDB" id="FungiDB:UMAG_03204"/>
<dbReference type="eggNOG" id="KOG2571">
    <property type="taxonomic scope" value="Eukaryota"/>
</dbReference>
<dbReference type="eggNOG" id="KOG4229">
    <property type="taxonomic scope" value="Eukaryota"/>
</dbReference>
<dbReference type="HOGENOM" id="CLU_000192_0_2_1"/>
<dbReference type="InParanoid" id="Q4P9K9"/>
<dbReference type="OMA" id="LEMHHQI"/>
<dbReference type="OrthoDB" id="370884at2759"/>
<dbReference type="BRENDA" id="2.4.1.16">
    <property type="organism ID" value="6587"/>
</dbReference>
<dbReference type="PHI-base" id="PHI:1114"/>
<dbReference type="PHI-base" id="PHI:2226"/>
<dbReference type="Proteomes" id="UP000000561">
    <property type="component" value="Chromosome 8"/>
</dbReference>
<dbReference type="GO" id="GO:0071944">
    <property type="term" value="C:cell periphery"/>
    <property type="evidence" value="ECO:0000318"/>
    <property type="project" value="GO_Central"/>
</dbReference>
<dbReference type="GO" id="GO:0030428">
    <property type="term" value="C:cell septum"/>
    <property type="evidence" value="ECO:0000318"/>
    <property type="project" value="GO_Central"/>
</dbReference>
<dbReference type="GO" id="GO:0051286">
    <property type="term" value="C:cell tip"/>
    <property type="evidence" value="ECO:0007669"/>
    <property type="project" value="UniProtKB-SubCell"/>
</dbReference>
<dbReference type="GO" id="GO:0030659">
    <property type="term" value="C:cytoplasmic vesicle membrane"/>
    <property type="evidence" value="ECO:0007669"/>
    <property type="project" value="UniProtKB-SubCell"/>
</dbReference>
<dbReference type="GO" id="GO:0016459">
    <property type="term" value="C:myosin complex"/>
    <property type="evidence" value="ECO:0007669"/>
    <property type="project" value="UniProtKB-KW"/>
</dbReference>
<dbReference type="GO" id="GO:0005886">
    <property type="term" value="C:plasma membrane"/>
    <property type="evidence" value="ECO:0007669"/>
    <property type="project" value="UniProtKB-SubCell"/>
</dbReference>
<dbReference type="GO" id="GO:0003779">
    <property type="term" value="F:actin binding"/>
    <property type="evidence" value="ECO:0007669"/>
    <property type="project" value="UniProtKB-KW"/>
</dbReference>
<dbReference type="GO" id="GO:0005524">
    <property type="term" value="F:ATP binding"/>
    <property type="evidence" value="ECO:0007669"/>
    <property type="project" value="UniProtKB-KW"/>
</dbReference>
<dbReference type="GO" id="GO:0004100">
    <property type="term" value="F:chitin synthase activity"/>
    <property type="evidence" value="ECO:0000318"/>
    <property type="project" value="GO_Central"/>
</dbReference>
<dbReference type="GO" id="GO:0003774">
    <property type="term" value="F:cytoskeletal motor activity"/>
    <property type="evidence" value="ECO:0007669"/>
    <property type="project" value="InterPro"/>
</dbReference>
<dbReference type="GO" id="GO:0006031">
    <property type="term" value="P:chitin biosynthetic process"/>
    <property type="evidence" value="ECO:0000318"/>
    <property type="project" value="GO_Central"/>
</dbReference>
<dbReference type="GO" id="GO:0031505">
    <property type="term" value="P:fungal-type cell wall organization"/>
    <property type="evidence" value="ECO:0000318"/>
    <property type="project" value="GO_Central"/>
</dbReference>
<dbReference type="CDD" id="cd14879">
    <property type="entry name" value="MYSc_Myo17"/>
    <property type="match status" value="1"/>
</dbReference>
<dbReference type="FunFam" id="1.20.58.530:FF:000029">
    <property type="entry name" value="Probable chitin synthase 8"/>
    <property type="match status" value="1"/>
</dbReference>
<dbReference type="Gene3D" id="1.10.10.820">
    <property type="match status" value="1"/>
</dbReference>
<dbReference type="Gene3D" id="1.20.58.530">
    <property type="match status" value="2"/>
</dbReference>
<dbReference type="Gene3D" id="1.10.10.60">
    <property type="entry name" value="Homeodomain-like"/>
    <property type="match status" value="1"/>
</dbReference>
<dbReference type="Gene3D" id="3.40.850.10">
    <property type="entry name" value="Kinesin motor domain"/>
    <property type="match status" value="2"/>
</dbReference>
<dbReference type="Gene3D" id="1.20.120.720">
    <property type="entry name" value="Myosin VI head, motor domain, U50 subdomain"/>
    <property type="match status" value="1"/>
</dbReference>
<dbReference type="InterPro" id="IPR004835">
    <property type="entry name" value="Chitin_synth"/>
</dbReference>
<dbReference type="InterPro" id="IPR001199">
    <property type="entry name" value="Cyt_B5-like_heme/steroid-bd"/>
</dbReference>
<dbReference type="InterPro" id="IPR036400">
    <property type="entry name" value="Cyt_B5-like_heme/steroid_sf"/>
</dbReference>
<dbReference type="InterPro" id="IPR014876">
    <property type="entry name" value="DEK_C"/>
</dbReference>
<dbReference type="InterPro" id="IPR036961">
    <property type="entry name" value="Kinesin_motor_dom_sf"/>
</dbReference>
<dbReference type="InterPro" id="IPR001609">
    <property type="entry name" value="Myosin_head_motor_dom-like"/>
</dbReference>
<dbReference type="InterPro" id="IPR036037">
    <property type="entry name" value="MYSc_Myo17"/>
</dbReference>
<dbReference type="InterPro" id="IPR029044">
    <property type="entry name" value="Nucleotide-diphossugar_trans"/>
</dbReference>
<dbReference type="InterPro" id="IPR027417">
    <property type="entry name" value="P-loop_NTPase"/>
</dbReference>
<dbReference type="PANTHER" id="PTHR22914">
    <property type="entry name" value="CHITIN SYNTHASE"/>
    <property type="match status" value="1"/>
</dbReference>
<dbReference type="PANTHER" id="PTHR22914:SF45">
    <property type="entry name" value="CHITIN SYNTHASE"/>
    <property type="match status" value="1"/>
</dbReference>
<dbReference type="Pfam" id="PF03142">
    <property type="entry name" value="Chitin_synth_2"/>
    <property type="match status" value="1"/>
</dbReference>
<dbReference type="Pfam" id="PF00173">
    <property type="entry name" value="Cyt-b5"/>
    <property type="match status" value="1"/>
</dbReference>
<dbReference type="Pfam" id="PF08766">
    <property type="entry name" value="DEK_C"/>
    <property type="match status" value="1"/>
</dbReference>
<dbReference type="Pfam" id="PF00063">
    <property type="entry name" value="Myosin_head"/>
    <property type="match status" value="1"/>
</dbReference>
<dbReference type="PRINTS" id="PR00193">
    <property type="entry name" value="MYOSINHEAVY"/>
</dbReference>
<dbReference type="SMART" id="SM01117">
    <property type="entry name" value="Cyt-b5"/>
    <property type="match status" value="2"/>
</dbReference>
<dbReference type="SMART" id="SM00242">
    <property type="entry name" value="MYSc"/>
    <property type="match status" value="1"/>
</dbReference>
<dbReference type="SUPFAM" id="SSF55856">
    <property type="entry name" value="Cytochrome b5-like heme/steroid binding domain"/>
    <property type="match status" value="1"/>
</dbReference>
<dbReference type="SUPFAM" id="SSF109715">
    <property type="entry name" value="DEK C-terminal domain"/>
    <property type="match status" value="1"/>
</dbReference>
<dbReference type="SUPFAM" id="SSF53448">
    <property type="entry name" value="Nucleotide-diphospho-sugar transferases"/>
    <property type="match status" value="1"/>
</dbReference>
<dbReference type="SUPFAM" id="SSF52540">
    <property type="entry name" value="P-loop containing nucleoside triphosphate hydrolases"/>
    <property type="match status" value="1"/>
</dbReference>
<dbReference type="PROSITE" id="PS51998">
    <property type="entry name" value="DEK_C"/>
    <property type="match status" value="1"/>
</dbReference>
<dbReference type="PROSITE" id="PS51456">
    <property type="entry name" value="MYOSIN_MOTOR"/>
    <property type="match status" value="1"/>
</dbReference>
<proteinExistence type="evidence at transcript level"/>
<name>CHS8_MYCMD</name>
<feature type="chain" id="PRO_0000270624" description="Chitin synthase 8">
    <location>
        <begin position="1"/>
        <end position="2005"/>
    </location>
</feature>
<feature type="transmembrane region" description="Helical" evidence="1">
    <location>
        <begin position="929"/>
        <end position="949"/>
    </location>
</feature>
<feature type="transmembrane region" description="Helical" evidence="1">
    <location>
        <begin position="965"/>
        <end position="985"/>
    </location>
</feature>
<feature type="transmembrane region" description="Helical" evidence="1">
    <location>
        <begin position="1232"/>
        <end position="1252"/>
    </location>
</feature>
<feature type="transmembrane region" description="Helical" evidence="1">
    <location>
        <begin position="1604"/>
        <end position="1624"/>
    </location>
</feature>
<feature type="transmembrane region" description="Helical" evidence="1">
    <location>
        <begin position="1626"/>
        <end position="1646"/>
    </location>
</feature>
<feature type="transmembrane region" description="Helical" evidence="1">
    <location>
        <begin position="1653"/>
        <end position="1673"/>
    </location>
</feature>
<feature type="transmembrane region" description="Helical" evidence="1">
    <location>
        <begin position="1680"/>
        <end position="1700"/>
    </location>
</feature>
<feature type="domain" description="Myosin motor" evidence="2">
    <location>
        <begin position="5"/>
        <end position="773"/>
    </location>
</feature>
<feature type="domain" description="DEK-C" evidence="3">
    <location>
        <begin position="1948"/>
        <end position="2003"/>
    </location>
</feature>
<feature type="region of interest" description="Disordered" evidence="4">
    <location>
        <begin position="585"/>
        <end position="631"/>
    </location>
</feature>
<feature type="region of interest" description="Actin-binding" evidence="2">
    <location>
        <begin position="647"/>
        <end position="669"/>
    </location>
</feature>
<feature type="region of interest" description="Disordered" evidence="4">
    <location>
        <begin position="1796"/>
        <end position="1821"/>
    </location>
</feature>
<feature type="region of interest" description="Disordered" evidence="4">
    <location>
        <begin position="1912"/>
        <end position="1950"/>
    </location>
</feature>
<feature type="compositionally biased region" description="Acidic residues" evidence="4">
    <location>
        <begin position="615"/>
        <end position="624"/>
    </location>
</feature>
<feature type="compositionally biased region" description="Polar residues" evidence="4">
    <location>
        <begin position="1797"/>
        <end position="1811"/>
    </location>
</feature>
<feature type="compositionally biased region" description="Low complexity" evidence="4">
    <location>
        <begin position="1917"/>
        <end position="1930"/>
    </location>
</feature>
<feature type="binding site" evidence="2">
    <location>
        <begin position="108"/>
        <end position="115"/>
    </location>
    <ligand>
        <name>ATP</name>
        <dbReference type="ChEBI" id="CHEBI:30616"/>
    </ligand>
</feature>
<feature type="glycosylation site" description="N-linked (GlcNAc...) asparagine" evidence="1">
    <location>
        <position position="164"/>
    </location>
</feature>
<feature type="glycosylation site" description="N-linked (GlcNAc...) asparagine" evidence="1">
    <location>
        <position position="364"/>
    </location>
</feature>
<feature type="glycosylation site" description="N-linked (GlcNAc...) asparagine" evidence="1">
    <location>
        <position position="390"/>
    </location>
</feature>
<feature type="glycosylation site" description="N-linked (GlcNAc...) asparagine" evidence="1">
    <location>
        <position position="546"/>
    </location>
</feature>
<feature type="glycosylation site" description="N-linked (GlcNAc...) asparagine" evidence="1">
    <location>
        <position position="1076"/>
    </location>
</feature>
<feature type="glycosylation site" description="N-linked (GlcNAc...) asparagine" evidence="1">
    <location>
        <position position="1650"/>
    </location>
</feature>
<feature type="glycosylation site" description="N-linked (GlcNAc...) asparagine" evidence="1">
    <location>
        <position position="1770"/>
    </location>
</feature>
<feature type="glycosylation site" description="N-linked (GlcNAc...) asparagine" evidence="1">
    <location>
        <position position="1794"/>
    </location>
</feature>
<feature type="glycosylation site" description="N-linked (GlcNAc...) asparagine" evidence="1">
    <location>
        <position position="1882"/>
    </location>
</feature>
<sequence>MSALDEVAKLSQLTNITPDTIFSVLRDRFYAGLPYTALSDSILVSVNPYASSGNRNSDDTLREYTSDYRQTNKQLRAATLPPHIFAHACNAYFYMRRTGQDQSLLMAGDTSSGKSEVRRLALRALIDLSVAPPGKKGSKLGVQIPSAEYILEALGNSRTLENSNASRFGKYTELQFSDSGKLVGAKTLDYYLEKNRVVSAASSERNFHIFHYMVAGASDEEKQYLGIHDAASFRYLGQASRNMDTQDAAKFDRLKLAFKNVGFSKRNVASICQVLAAILHLGNIEFHYDRQRTQDSATIRNPEVLDKVAEYLGISSKSLEEALTYKTKMIRNEVCTILLDADGASDHRDDLAKSLYSLLFAWVNESLNEKLCRDDFDTFIGLLDLPGFQNLSKGNSLDQFCVNFACENLHRFMLRSVFEKRRDEFADEGISHLSPEVPYFDNAETLRLMTNQPGGLIHIMDDQARRMPKKTDQTMIEAFGKRWGNHPSFKVGPADRSGFSSFTISHYNSAVTYTSENLLEKNSEVVSTDFVSLLRGNPQESGKLRNDSSQSSGSTIPFIRGIFNTKVLKTQSHPKNDQTIVAAQQSVKPMRAPSTRRPNRGNTIKRTNTIKKADDDDSDEDAADAADASTSKKNAVRCVAGDFRGALDLLLETLEDTKTWFTLCLRPNDNQLPNQFEARVVKQQITTLGLSEMSRKLLNEYSVSMTYEEFCQRYADVPSLQAVQMRDAVSGEAKQKFSAARQVMSWSDQEAVSGRVKVFLSHTAFRELEDELRAADAEEVKNNEKRAQLDADAAARGESDPFSPVAVLADDYTRSRSNDFVGAYGDPFKERSSVALPLVGRGAAGNEDDLEEVKSQYSGMSGTLARHSFVGGLSGAPSFVASEAYAPSRNMFADMGKNGLNEKAGTAAFTEEPLGEVAEEVGVSSTRRKWVALTWAITFWIPSFILSRFRSLKRPDIRMAWREKLAINLIIWFICACAVFVIVVLGNLICPKQHVYSPTEFASHKGDSSFTAIRGEVFDLSNLVASHKTIVPVVPANSILAYAGEDATPIFPVQVNALCNGVDGNVSPWVQLSNENSTDKHAQYHDFRSYHIDDARPDWYYESMWLLRSNYRVGFMGYTTDGIRDILSEGRAVAIYRGDIYDVSDYIKQGNQGVLRAPDGFQAPANTNRKFMSDAIISLIAQNPGKDITKQLDNLPLDPVVLDRQRVCLRNLYFIGKVDHRNSPQCRFAQYILLALSLFMVAILGFKFLAALQFGRARKPEDHDKFVICQVPCYTEGEESMRKTINSLAALKYDDKRKLLFIICDGMIVGSGNDRPTPRIVLDILGADPNLEPEALSFLSLGEGSKQHNMAKIYSGLYEHHGHVVPYIVVVKCGKPSERSRPGNRGKRDSQLVLMRFLNKVHFGLPMNPMELEIYHQIKNVIGVNPSFYEYILQVDADTEVEAMSLNRFISAFIRDKKVIGLCGETALSNAKASIITMLQVYEYYISHYLAKAFESLFGSVTCLPGCFSMFRIRTPDTHRPLFIASQIVEDYAENRVDTLHTKNLLHLGEDRYLTTLVLKHFGKYKTIFVRDCKAWTVAPDDWKVLLSQRRRWINSTVHNLVELIFTPGLCGFCLFSMRFIVFIDLLSTIIAPVTVCYIVYLIVLVATANGTVPLTAIIMLAAIYGCQAVIFLLNRKFEMIGWMIVYIIGIPIWSLFLPLYSFWHMDDFSWGNTRVVMGEKGQKVVLHEEGTFDPSEIPLQTWTDYENELWERNSARSIGSIIEAARAENKSLGSRAGSQYAPSLYGQPMLPHNASFGHSPSPSYGGTPSQFGAFAPGPGSQIGGSQIGAGAGYFPQDAARQSTYSIGGGYGGQAMSMYGLPPSSSFGVPTGGSGFMPQPFNTTASMYGYPQQVAATQSIYGGSQLGFGGGFATAEQQQQQQQQQQAAGLSGSGGSKSPPREAVAGGLPSDSQIKLDIRSLIAESDLTTITKKQLRAKLEQKYATSIESKKAFINSEIENVLSES</sequence>
<accession>Q4P9K9</accession>
<accession>A0A0D1E236</accession>
<protein>
    <recommendedName>
        <fullName evidence="13">Chitin synthase 8</fullName>
        <ecNumber evidence="15">2.4.1.16</ecNumber>
    </recommendedName>
    <alternativeName>
        <fullName>Chitin-UDP acetyl-glucosaminyl transferase 8</fullName>
    </alternativeName>
    <alternativeName>
        <fullName evidence="12">Class-V chitin synthase</fullName>
    </alternativeName>
    <alternativeName>
        <fullName evidence="11">Myosin chitin synthase 1</fullName>
    </alternativeName>
</protein>
<reference key="1">
    <citation type="journal article" date="2006" name="Nature">
        <title>Insights from the genome of the biotrophic fungal plant pathogen Ustilago maydis.</title>
        <authorList>
            <person name="Kaemper J."/>
            <person name="Kahmann R."/>
            <person name="Boelker M."/>
            <person name="Ma L.-J."/>
            <person name="Brefort T."/>
            <person name="Saville B.J."/>
            <person name="Banuett F."/>
            <person name="Kronstad J.W."/>
            <person name="Gold S.E."/>
            <person name="Mueller O."/>
            <person name="Perlin M.H."/>
            <person name="Woesten H.A.B."/>
            <person name="de Vries R."/>
            <person name="Ruiz-Herrera J."/>
            <person name="Reynaga-Pena C.G."/>
            <person name="Snetselaar K."/>
            <person name="McCann M."/>
            <person name="Perez-Martin J."/>
            <person name="Feldbruegge M."/>
            <person name="Basse C.W."/>
            <person name="Steinberg G."/>
            <person name="Ibeas J.I."/>
            <person name="Holloman W."/>
            <person name="Guzman P."/>
            <person name="Farman M.L."/>
            <person name="Stajich J.E."/>
            <person name="Sentandreu R."/>
            <person name="Gonzalez-Prieto J.M."/>
            <person name="Kennell J.C."/>
            <person name="Molina L."/>
            <person name="Schirawski J."/>
            <person name="Mendoza-Mendoza A."/>
            <person name="Greilinger D."/>
            <person name="Muench K."/>
            <person name="Roessel N."/>
            <person name="Scherer M."/>
            <person name="Vranes M."/>
            <person name="Ladendorf O."/>
            <person name="Vincon V."/>
            <person name="Fuchs U."/>
            <person name="Sandrock B."/>
            <person name="Meng S."/>
            <person name="Ho E.C.H."/>
            <person name="Cahill M.J."/>
            <person name="Boyce K.J."/>
            <person name="Klose J."/>
            <person name="Klosterman S.J."/>
            <person name="Deelstra H.J."/>
            <person name="Ortiz-Castellanos L."/>
            <person name="Li W."/>
            <person name="Sanchez-Alonso P."/>
            <person name="Schreier P.H."/>
            <person name="Haeuser-Hahn I."/>
            <person name="Vaupel M."/>
            <person name="Koopmann E."/>
            <person name="Friedrich G."/>
            <person name="Voss H."/>
            <person name="Schlueter T."/>
            <person name="Margolis J."/>
            <person name="Platt D."/>
            <person name="Swimmer C."/>
            <person name="Gnirke A."/>
            <person name="Chen F."/>
            <person name="Vysotskaia V."/>
            <person name="Mannhaupt G."/>
            <person name="Gueldener U."/>
            <person name="Muensterkoetter M."/>
            <person name="Haase D."/>
            <person name="Oesterheld M."/>
            <person name="Mewes H.-W."/>
            <person name="Mauceli E.W."/>
            <person name="DeCaprio D."/>
            <person name="Wade C.M."/>
            <person name="Butler J."/>
            <person name="Young S.K."/>
            <person name="Jaffe D.B."/>
            <person name="Calvo S.E."/>
            <person name="Nusbaum C."/>
            <person name="Galagan J.E."/>
            <person name="Birren B.W."/>
        </authorList>
    </citation>
    <scope>NUCLEOTIDE SEQUENCE [LARGE SCALE GENOMIC DNA]</scope>
    <source>
        <strain>DSM 14603 / FGSC 9021 / UM521</strain>
    </source>
</reference>
<reference key="2">
    <citation type="submission" date="2014-09" db="EMBL/GenBank/DDBJ databases">
        <authorList>
            <person name="Gueldener U."/>
            <person name="Muensterkoetter M."/>
            <person name="Walter M.C."/>
            <person name="Mannhaupt G."/>
            <person name="Kahmann R."/>
        </authorList>
    </citation>
    <scope>GENOME REANNOTATION</scope>
    <source>
        <strain>DSM 14603 / FGSC 9021 / UM521</strain>
    </source>
</reference>
<reference key="3">
    <citation type="journal article" date="2006" name="FEMS Yeast Res.">
        <title>Immunolocalization of chitin synthases in the phytopathogenic dimorphic fungus Ustilago maydis.</title>
        <authorList>
            <person name="Ruiz-Herrera J."/>
            <person name="Xoconostle-Cazares B."/>
            <person name="Reynaga-Pena C.G."/>
            <person name="Leon-Ramirez C."/>
            <person name="Carabez-Trejo A."/>
        </authorList>
    </citation>
    <scope>SUBCELLULAR LOCATION</scope>
</reference>
<reference key="4">
    <citation type="journal article" date="2006" name="Plant Cell">
        <title>Polar localizing class V myosin chitin synthases are essential during early plant infection in the plant pathogenic fungus Ustilago maydis.</title>
        <authorList>
            <person name="Weber I."/>
            <person name="Assmann D."/>
            <person name="Thines E."/>
            <person name="Steinberg G."/>
        </authorList>
    </citation>
    <scope>FUNCTION</scope>
    <scope>SUBCELLULAR LOCATION</scope>
</reference>
<reference key="5">
    <citation type="journal article" date="2010" name="Plant Cell">
        <title>The myosin motor domain of fungal chitin synthase V is dispensable for vesicle motility but required for virulence of the maize pathogen Ustilago maydis.</title>
        <authorList>
            <person name="Treitschke S."/>
            <person name="Doehlemann G."/>
            <person name="Schuster M."/>
            <person name="Steinberg G."/>
        </authorList>
    </citation>
    <scope>FUNCTION</scope>
    <scope>SUBCELLULAR LOCATION</scope>
    <scope>DOMAIN</scope>
</reference>
<reference key="6">
    <citation type="journal article" date="2012" name="Curr. Microbiol.">
        <title>Transcriptional regulation of the genes encoding chitin and beta-1,3-glucan synthases from Ustilago maydis.</title>
        <authorList>
            <person name="Robledo-Briones M."/>
            <person name="Ruiz-Herrera J."/>
        </authorList>
    </citation>
    <scope>INDUCTION</scope>
</reference>
<reference key="7">
    <citation type="journal article" date="2012" name="EMBO J.">
        <title>Myosin-5, kinesin-1 and myosin-17 cooperate in secretion of fungal chitin synthase.</title>
        <authorList>
            <person name="Schuster M."/>
            <person name="Treitschke S."/>
            <person name="Kilaru S."/>
            <person name="Molloy J."/>
            <person name="Harmer N.J."/>
            <person name="Steinberg G."/>
        </authorList>
    </citation>
    <scope>SUBCELLULAR LOCATION</scope>
    <scope>DOMAIN</scope>
</reference>
<reference key="8">
    <citation type="journal article" date="2016" name="Nat. Microbiol.">
        <title>Co-delivery of cell-wall-forming enzymes in the same vesicle for coordinated fungal cell wall formation.</title>
        <authorList>
            <person name="Schuster M."/>
            <person name="Martin-Urdiroz M."/>
            <person name="Higuchi Y."/>
            <person name="Hacker C."/>
            <person name="Kilaru S."/>
            <person name="Gurr S.J."/>
            <person name="Steinberg G."/>
        </authorList>
    </citation>
    <scope>SUBCELLULAR LOCATION</scope>
    <scope>DOMAIN</scope>
</reference>
<gene>
    <name evidence="13" type="primary">CHS8</name>
    <name evidence="12" type="synonym">ChsV</name>
    <name evidence="11" type="synonym">MCS1</name>
    <name type="ORF">UMAG_03204</name>
</gene>
<keyword id="KW-0009">Actin-binding</keyword>
<keyword id="KW-0067">ATP-binding</keyword>
<keyword id="KW-1003">Cell membrane</keyword>
<keyword id="KW-0961">Cell wall biogenesis/degradation</keyword>
<keyword id="KW-0968">Cytoplasmic vesicle</keyword>
<keyword id="KW-0325">Glycoprotein</keyword>
<keyword id="KW-0328">Glycosyltransferase</keyword>
<keyword id="KW-0472">Membrane</keyword>
<keyword id="KW-0505">Motor protein</keyword>
<keyword id="KW-0518">Myosin</keyword>
<keyword id="KW-0547">Nucleotide-binding</keyword>
<keyword id="KW-1185">Reference proteome</keyword>
<keyword id="KW-0677">Repeat</keyword>
<keyword id="KW-0808">Transferase</keyword>
<keyword id="KW-0812">Transmembrane</keyword>
<keyword id="KW-1133">Transmembrane helix</keyword>
<keyword id="KW-0843">Virulence</keyword>
<evidence type="ECO:0000255" key="1"/>
<evidence type="ECO:0000255" key="2">
    <source>
        <dbReference type="PROSITE-ProRule" id="PRU00782"/>
    </source>
</evidence>
<evidence type="ECO:0000255" key="3">
    <source>
        <dbReference type="PROSITE-ProRule" id="PRU01342"/>
    </source>
</evidence>
<evidence type="ECO:0000256" key="4">
    <source>
        <dbReference type="SAM" id="MobiDB-lite"/>
    </source>
</evidence>
<evidence type="ECO:0000269" key="5">
    <source>
    </source>
</evidence>
<evidence type="ECO:0000269" key="6">
    <source>
    </source>
</evidence>
<evidence type="ECO:0000269" key="7">
    <source>
    </source>
</evidence>
<evidence type="ECO:0000269" key="8">
    <source>
    </source>
</evidence>
<evidence type="ECO:0000269" key="9">
    <source>
    </source>
</evidence>
<evidence type="ECO:0000269" key="10">
    <source>
    </source>
</evidence>
<evidence type="ECO:0000303" key="11">
    <source>
    </source>
</evidence>
<evidence type="ECO:0000303" key="12">
    <source>
    </source>
</evidence>
<evidence type="ECO:0000303" key="13">
    <source>
    </source>
</evidence>
<evidence type="ECO:0000305" key="14"/>
<evidence type="ECO:0000305" key="15">
    <source>
    </source>
</evidence>